<comment type="function">
    <text evidence="1">Reduces trimethylamine-N-oxide (TMAO) into trimethylamine; an anaerobic reaction coupled to energy-yielding reactions.</text>
</comment>
<comment type="catalytic activity">
    <reaction>
        <text>trimethylamine + 2 Fe(III)-[cytochrome c] + H2O = trimethylamine N-oxide + 2 Fe(II)-[cytochrome c] + 3 H(+)</text>
        <dbReference type="Rhea" id="RHEA:24236"/>
        <dbReference type="Rhea" id="RHEA-COMP:10350"/>
        <dbReference type="Rhea" id="RHEA-COMP:14399"/>
        <dbReference type="ChEBI" id="CHEBI:15377"/>
        <dbReference type="ChEBI" id="CHEBI:15378"/>
        <dbReference type="ChEBI" id="CHEBI:15724"/>
        <dbReference type="ChEBI" id="CHEBI:29033"/>
        <dbReference type="ChEBI" id="CHEBI:29034"/>
        <dbReference type="ChEBI" id="CHEBI:58389"/>
        <dbReference type="EC" id="1.7.2.3"/>
    </reaction>
</comment>
<comment type="cofactor">
    <cofactor evidence="1">
        <name>Mo-bis(molybdopterin guanine dinucleotide)</name>
        <dbReference type="ChEBI" id="CHEBI:60539"/>
    </cofactor>
    <text evidence="1">Binds 1 molybdenum-bis(molybdopterin guanine dinucleotide) (Mo-bis-MGD) cofactor per subunit.</text>
</comment>
<comment type="subcellular location">
    <subcellularLocation>
        <location evidence="1">Periplasm</location>
    </subcellularLocation>
</comment>
<comment type="PTM">
    <text>Predicted to be exported by the Tat system. The position of the signal peptide cleavage has not been experimentally proven.</text>
</comment>
<comment type="similarity">
    <text evidence="3">Belongs to the prokaryotic molybdopterin-containing oxidoreductase family.</text>
</comment>
<feature type="signal peptide" description="Tat-type signal" evidence="2">
    <location>
        <begin position="1"/>
        <end position="32"/>
    </location>
</feature>
<feature type="chain" id="PRO_0000019154" description="Trimethylamine-N-oxide reductase">
    <location>
        <begin position="33"/>
        <end position="823"/>
    </location>
</feature>
<feature type="binding site" evidence="1">
    <location>
        <position position="181"/>
    </location>
    <ligand>
        <name>Mo-bis(molybdopterin guanine dinucleotide)</name>
        <dbReference type="ChEBI" id="CHEBI:60539"/>
    </ligand>
    <ligandPart>
        <name>Mo</name>
        <dbReference type="ChEBI" id="CHEBI:28685"/>
    </ligandPart>
</feature>
<sequence length="823" mass="93357">MKQSRRQFLKNMSAMAATFAMPNFLIAQNAFAQSAENVSEWKITGSHWGAIRAKVQNGKVVDVKPFEYDQYPTEMIKGIKDLIYSEARIRYPMVRLDWLKKRHNSNTAQRGDNRFVRVTWDEALDLFYEELERIQQNYGPWALHTGNVGWRSTGQFHSCGNHMIRAVGMHGNSVSTSGDYSTGAGQVILPYVLGSTEVYSQGTSWEIILKESENIIFWASDPVKNLQVGWNCETHEAYKYLEQLKAKVAAKDVNVICVDPVKSKTQNYLGCDFQYINPQTDVAFMLALAHTLYVENLYDKKFIEMYTVGFEKFLPYLLGESEDKVVKDAEWAAKICAIQAEDIRQFARMLAGKRTQLIFGWAIQRQQHGEQPYWMGTVLAAMLGQIGLAGGGISYAHHYSSIGIPSSGAAMPGAFPLNLDEGQKPKYDNKNYNGYSAVIPCARITDSLLQPGETIDHNGQKITYAPYKMAIFTGCNHWHRHSERNKMKQAFQRLETIVSINYSWTATCRFSDIVLPACTPFERNDIDAYGSYSNRGVIAMQKLVDPLYDSRSDFEIFKDLCRRFGKEKEYCRNMDEMEWVKHLYEACRQENQGKFDMPPFAEFWQKGYVLFPEGEPWVRHADFREDPELHALGTPSGFIEIFSNKIASYGYADCKGHPMWFEKAERSHGGPKSDKYPFWLQSAHPDKRLHSQLCESKALRETYAIQDREPLFINPEDAKRLGIVHGDLVRVYNDRGQAIVGAHVSDNFPQGVLRLQEGAWYSPLDEKVGSIDTYGDPNTMSLDIGSSSLAQAVSANTCLVNIEKFVGQAPAVTGFHGPHEVAL</sequence>
<accession>Q9CK41</accession>
<evidence type="ECO:0000250" key="1"/>
<evidence type="ECO:0000255" key="2">
    <source>
        <dbReference type="PROSITE-ProRule" id="PRU00648"/>
    </source>
</evidence>
<evidence type="ECO:0000305" key="3"/>
<dbReference type="EC" id="1.7.2.3"/>
<dbReference type="EMBL" id="AE004439">
    <property type="protein sequence ID" value="AAK03877.1"/>
    <property type="molecule type" value="Genomic_DNA"/>
</dbReference>
<dbReference type="RefSeq" id="WP_010907339.1">
    <property type="nucleotide sequence ID" value="NC_002663.1"/>
</dbReference>
<dbReference type="SMR" id="Q9CK41"/>
<dbReference type="STRING" id="272843.PM1793"/>
<dbReference type="EnsemblBacteria" id="AAK03877">
    <property type="protein sequence ID" value="AAK03877"/>
    <property type="gene ID" value="PM1793"/>
</dbReference>
<dbReference type="KEGG" id="pmu:PM1793"/>
<dbReference type="PATRIC" id="fig|272843.6.peg.1817"/>
<dbReference type="HOGENOM" id="CLU_000422_13_3_6"/>
<dbReference type="OrthoDB" id="9815647at2"/>
<dbReference type="Proteomes" id="UP000000809">
    <property type="component" value="Chromosome"/>
</dbReference>
<dbReference type="GO" id="GO:0030288">
    <property type="term" value="C:outer membrane-bounded periplasmic space"/>
    <property type="evidence" value="ECO:0007669"/>
    <property type="project" value="TreeGrafter"/>
</dbReference>
<dbReference type="GO" id="GO:0009055">
    <property type="term" value="F:electron transfer activity"/>
    <property type="evidence" value="ECO:0007669"/>
    <property type="project" value="TreeGrafter"/>
</dbReference>
<dbReference type="GO" id="GO:0030151">
    <property type="term" value="F:molybdenum ion binding"/>
    <property type="evidence" value="ECO:0007669"/>
    <property type="project" value="InterPro"/>
</dbReference>
<dbReference type="GO" id="GO:0043546">
    <property type="term" value="F:molybdopterin cofactor binding"/>
    <property type="evidence" value="ECO:0007669"/>
    <property type="project" value="InterPro"/>
</dbReference>
<dbReference type="GO" id="GO:0050626">
    <property type="term" value="F:trimethylamine-N-oxide reductase (cytochrome c) activity"/>
    <property type="evidence" value="ECO:0007669"/>
    <property type="project" value="UniProtKB-EC"/>
</dbReference>
<dbReference type="GO" id="GO:0009061">
    <property type="term" value="P:anaerobic respiration"/>
    <property type="evidence" value="ECO:0007669"/>
    <property type="project" value="TreeGrafter"/>
</dbReference>
<dbReference type="CDD" id="cd02793">
    <property type="entry name" value="MopB_CT_DMSOR-BSOR-TMAOR"/>
    <property type="match status" value="1"/>
</dbReference>
<dbReference type="FunFam" id="2.40.40.20:FF:000009">
    <property type="entry name" value="Biotin sulfoxide reductase 2"/>
    <property type="match status" value="1"/>
</dbReference>
<dbReference type="Gene3D" id="2.40.40.20">
    <property type="match status" value="1"/>
</dbReference>
<dbReference type="Gene3D" id="3.40.50.740">
    <property type="match status" value="1"/>
</dbReference>
<dbReference type="Gene3D" id="3.40.228.10">
    <property type="entry name" value="Dimethylsulfoxide Reductase, domain 2"/>
    <property type="match status" value="1"/>
</dbReference>
<dbReference type="Gene3D" id="3.90.55.10">
    <property type="entry name" value="Dimethylsulfoxide Reductase, domain 3"/>
    <property type="match status" value="1"/>
</dbReference>
<dbReference type="InterPro" id="IPR009010">
    <property type="entry name" value="Asp_de-COase-like_dom_sf"/>
</dbReference>
<dbReference type="InterPro" id="IPR006658">
    <property type="entry name" value="BisC"/>
</dbReference>
<dbReference type="InterPro" id="IPR041954">
    <property type="entry name" value="CT_DMSOR/BSOR/TMAOR"/>
</dbReference>
<dbReference type="InterPro" id="IPR041460">
    <property type="entry name" value="Molybdopterin_N"/>
</dbReference>
<dbReference type="InterPro" id="IPR006657">
    <property type="entry name" value="MoPterin_dinucl-bd_dom"/>
</dbReference>
<dbReference type="InterPro" id="IPR006656">
    <property type="entry name" value="Mopterin_OxRdtase"/>
</dbReference>
<dbReference type="InterPro" id="IPR006655">
    <property type="entry name" value="Mopterin_OxRdtase_prok_CS"/>
</dbReference>
<dbReference type="InterPro" id="IPR050612">
    <property type="entry name" value="Prok_Mopterin_Oxidored"/>
</dbReference>
<dbReference type="InterPro" id="IPR006311">
    <property type="entry name" value="TAT_signal"/>
</dbReference>
<dbReference type="InterPro" id="IPR011887">
    <property type="entry name" value="TorA"/>
</dbReference>
<dbReference type="NCBIfam" id="TIGR00509">
    <property type="entry name" value="bisC_fam"/>
    <property type="match status" value="1"/>
</dbReference>
<dbReference type="NCBIfam" id="NF011682">
    <property type="entry name" value="PRK15102.1"/>
    <property type="match status" value="1"/>
</dbReference>
<dbReference type="NCBIfam" id="TIGR02164">
    <property type="entry name" value="torA"/>
    <property type="match status" value="1"/>
</dbReference>
<dbReference type="PANTHER" id="PTHR43742">
    <property type="entry name" value="TRIMETHYLAMINE-N-OXIDE REDUCTASE"/>
    <property type="match status" value="1"/>
</dbReference>
<dbReference type="PANTHER" id="PTHR43742:SF4">
    <property type="entry name" value="TRIMETHYLAMINE-N-OXIDE REDUCTASE 1"/>
    <property type="match status" value="1"/>
</dbReference>
<dbReference type="Pfam" id="PF00384">
    <property type="entry name" value="Molybdopterin"/>
    <property type="match status" value="1"/>
</dbReference>
<dbReference type="Pfam" id="PF18364">
    <property type="entry name" value="Molybdopterin_N"/>
    <property type="match status" value="1"/>
</dbReference>
<dbReference type="Pfam" id="PF01568">
    <property type="entry name" value="Molydop_binding"/>
    <property type="match status" value="1"/>
</dbReference>
<dbReference type="SUPFAM" id="SSF50692">
    <property type="entry name" value="ADC-like"/>
    <property type="match status" value="1"/>
</dbReference>
<dbReference type="SUPFAM" id="SSF53706">
    <property type="entry name" value="Formate dehydrogenase/DMSO reductase, domains 1-3"/>
    <property type="match status" value="1"/>
</dbReference>
<dbReference type="PROSITE" id="PS00490">
    <property type="entry name" value="MOLYBDOPTERIN_PROK_2"/>
    <property type="match status" value="1"/>
</dbReference>
<dbReference type="PROSITE" id="PS00932">
    <property type="entry name" value="MOLYBDOPTERIN_PROK_3"/>
    <property type="match status" value="1"/>
</dbReference>
<dbReference type="PROSITE" id="PS51318">
    <property type="entry name" value="TAT"/>
    <property type="match status" value="1"/>
</dbReference>
<proteinExistence type="inferred from homology"/>
<keyword id="KW-0479">Metal-binding</keyword>
<keyword id="KW-0500">Molybdenum</keyword>
<keyword id="KW-0560">Oxidoreductase</keyword>
<keyword id="KW-0574">Periplasm</keyword>
<keyword id="KW-1185">Reference proteome</keyword>
<keyword id="KW-0732">Signal</keyword>
<reference key="1">
    <citation type="journal article" date="2001" name="Proc. Natl. Acad. Sci. U.S.A.">
        <title>Complete genomic sequence of Pasteurella multocida Pm70.</title>
        <authorList>
            <person name="May B.J."/>
            <person name="Zhang Q."/>
            <person name="Li L.L."/>
            <person name="Paustian M.L."/>
            <person name="Whittam T.S."/>
            <person name="Kapur V."/>
        </authorList>
    </citation>
    <scope>NUCLEOTIDE SEQUENCE [LARGE SCALE GENOMIC DNA]</scope>
    <source>
        <strain>Pm70</strain>
    </source>
</reference>
<organism>
    <name type="scientific">Pasteurella multocida (strain Pm70)</name>
    <dbReference type="NCBI Taxonomy" id="272843"/>
    <lineage>
        <taxon>Bacteria</taxon>
        <taxon>Pseudomonadati</taxon>
        <taxon>Pseudomonadota</taxon>
        <taxon>Gammaproteobacteria</taxon>
        <taxon>Pasteurellales</taxon>
        <taxon>Pasteurellaceae</taxon>
        <taxon>Pasteurella</taxon>
    </lineage>
</organism>
<protein>
    <recommendedName>
        <fullName>Trimethylamine-N-oxide reductase</fullName>
        <shortName>TMAO reductase</shortName>
        <shortName>Trimethylamine oxidase</shortName>
        <ecNumber>1.7.2.3</ecNumber>
    </recommendedName>
</protein>
<name>TORA_PASMU</name>
<gene>
    <name type="primary">torA</name>
    <name type="ordered locus">PM1793</name>
</gene>